<feature type="chain" id="PRO_0000057177" description="Ribonuclease pancreatic">
    <location>
        <begin position="1"/>
        <end position="124"/>
    </location>
</feature>
<feature type="region of interest" description="Disordered" evidence="2">
    <location>
        <begin position="1"/>
        <end position="23"/>
    </location>
</feature>
<feature type="compositionally biased region" description="Basic and acidic residues" evidence="2">
    <location>
        <begin position="1"/>
        <end position="13"/>
    </location>
</feature>
<feature type="active site" description="Proton acceptor" evidence="1">
    <location>
        <position position="12"/>
    </location>
</feature>
<feature type="active site" description="Proton donor" evidence="1">
    <location>
        <position position="119"/>
    </location>
</feature>
<feature type="binding site" evidence="1">
    <location>
        <position position="7"/>
    </location>
    <ligand>
        <name>substrate</name>
    </ligand>
</feature>
<feature type="binding site" evidence="1">
    <location>
        <position position="10"/>
    </location>
    <ligand>
        <name>substrate</name>
    </ligand>
</feature>
<feature type="binding site" evidence="1">
    <location>
        <begin position="41"/>
        <end position="45"/>
    </location>
    <ligand>
        <name>substrate</name>
    </ligand>
</feature>
<feature type="binding site" evidence="1">
    <location>
        <position position="66"/>
    </location>
    <ligand>
        <name>substrate</name>
    </ligand>
</feature>
<feature type="binding site" evidence="1">
    <location>
        <position position="85"/>
    </location>
    <ligand>
        <name>substrate</name>
    </ligand>
</feature>
<feature type="glycosylation site" description="N-linked (GlcNAc...) asparagine" evidence="3">
    <location>
        <position position="34"/>
    </location>
</feature>
<feature type="disulfide bond" evidence="1">
    <location>
        <begin position="26"/>
        <end position="84"/>
    </location>
</feature>
<feature type="disulfide bond" evidence="1">
    <location>
        <begin position="40"/>
        <end position="95"/>
    </location>
</feature>
<feature type="disulfide bond" evidence="1">
    <location>
        <begin position="58"/>
        <end position="110"/>
    </location>
</feature>
<feature type="disulfide bond" evidence="1">
    <location>
        <begin position="65"/>
        <end position="72"/>
    </location>
</feature>
<evidence type="ECO:0000250" key="1"/>
<evidence type="ECO:0000256" key="2">
    <source>
        <dbReference type="SAM" id="MobiDB-lite"/>
    </source>
</evidence>
<evidence type="ECO:0000269" key="3">
    <source>
    </source>
</evidence>
<evidence type="ECO:0000305" key="4"/>
<proteinExistence type="evidence at protein level"/>
<organism>
    <name type="scientific">Alces alces alces</name>
    <name type="common">European moose</name>
    <name type="synonym">Elk</name>
    <dbReference type="NCBI Taxonomy" id="9853"/>
    <lineage>
        <taxon>Eukaryota</taxon>
        <taxon>Metazoa</taxon>
        <taxon>Chordata</taxon>
        <taxon>Craniata</taxon>
        <taxon>Vertebrata</taxon>
        <taxon>Euteleostomi</taxon>
        <taxon>Mammalia</taxon>
        <taxon>Eutheria</taxon>
        <taxon>Laurasiatheria</taxon>
        <taxon>Artiodactyla</taxon>
        <taxon>Ruminantia</taxon>
        <taxon>Pecora</taxon>
        <taxon>Cervidae</taxon>
        <taxon>Odocoileinae</taxon>
        <taxon>Alces</taxon>
    </lineage>
</organism>
<comment type="function">
    <text evidence="1">Endonuclease that catalyzes the cleavage of RNA on the 3' side of pyrimidine nucleotides. Acts on single-stranded and double-stranded RNA (By similarity).</text>
</comment>
<comment type="catalytic activity">
    <reaction>
        <text>an [RNA] containing cytidine + H2O = an [RNA]-3'-cytidine-3'-phosphate + a 5'-hydroxy-ribonucleotide-3'-[RNA].</text>
        <dbReference type="EC" id="4.6.1.18"/>
    </reaction>
</comment>
<comment type="catalytic activity">
    <reaction>
        <text>an [RNA] containing uridine + H2O = an [RNA]-3'-uridine-3'-phosphate + a 5'-hydroxy-ribonucleotide-3'-[RNA].</text>
        <dbReference type="EC" id="4.6.1.18"/>
    </reaction>
</comment>
<comment type="subunit">
    <text evidence="1">Monomer. Interacts with and forms tight 1:1 complexes with RNH1. Dimerization of two such complexes may occur. Interaction with RNH1 inhibits this protein (By similarity).</text>
</comment>
<comment type="subcellular location">
    <subcellularLocation>
        <location>Secreted</location>
    </subcellularLocation>
</comment>
<comment type="tissue specificity">
    <text>Pancreas.</text>
</comment>
<comment type="similarity">
    <text evidence="4">Belongs to the pancreatic ribonuclease family.</text>
</comment>
<reference key="1">
    <citation type="journal article" date="1975" name="FEBS Lett.">
        <title>The amino acid sequences of reindeer, moose and fallow deer pancreatic ribonucleases.</title>
        <authorList>
            <person name="Leijenaar-Van den Berg G."/>
            <person name="Beintema J.J."/>
        </authorList>
    </citation>
    <scope>PARTIAL PROTEIN SEQUENCE</scope>
    <scope>GLYCOSYLATION AT ASN-34</scope>
    <source>
        <tissue>Pancreas</tissue>
    </source>
</reference>
<dbReference type="EC" id="4.6.1.18"/>
<dbReference type="PIR" id="C91418">
    <property type="entry name" value="NREKN"/>
</dbReference>
<dbReference type="SMR" id="P00667"/>
<dbReference type="GlyCosmos" id="P00667">
    <property type="glycosylation" value="1 site, No reported glycans"/>
</dbReference>
<dbReference type="iPTMnet" id="P00667"/>
<dbReference type="GO" id="GO:0005576">
    <property type="term" value="C:extracellular region"/>
    <property type="evidence" value="ECO:0007669"/>
    <property type="project" value="UniProtKB-SubCell"/>
</dbReference>
<dbReference type="GO" id="GO:0016829">
    <property type="term" value="F:lyase activity"/>
    <property type="evidence" value="ECO:0007669"/>
    <property type="project" value="UniProtKB-KW"/>
</dbReference>
<dbReference type="GO" id="GO:0003676">
    <property type="term" value="F:nucleic acid binding"/>
    <property type="evidence" value="ECO:0007669"/>
    <property type="project" value="InterPro"/>
</dbReference>
<dbReference type="GO" id="GO:0004522">
    <property type="term" value="F:ribonuclease A activity"/>
    <property type="evidence" value="ECO:0007669"/>
    <property type="project" value="UniProtKB-EC"/>
</dbReference>
<dbReference type="GO" id="GO:0050830">
    <property type="term" value="P:defense response to Gram-positive bacterium"/>
    <property type="evidence" value="ECO:0007669"/>
    <property type="project" value="TreeGrafter"/>
</dbReference>
<dbReference type="CDD" id="cd06265">
    <property type="entry name" value="RNase_A_canonical"/>
    <property type="match status" value="1"/>
</dbReference>
<dbReference type="FunFam" id="3.10.130.10:FF:000001">
    <property type="entry name" value="Ribonuclease pancreatic"/>
    <property type="match status" value="1"/>
</dbReference>
<dbReference type="Gene3D" id="3.10.130.10">
    <property type="entry name" value="Ribonuclease A-like domain"/>
    <property type="match status" value="1"/>
</dbReference>
<dbReference type="InterPro" id="IPR001427">
    <property type="entry name" value="RNaseA"/>
</dbReference>
<dbReference type="InterPro" id="IPR036816">
    <property type="entry name" value="RNaseA-like_dom_sf"/>
</dbReference>
<dbReference type="InterPro" id="IPR023411">
    <property type="entry name" value="RNaseA_AS"/>
</dbReference>
<dbReference type="InterPro" id="IPR023412">
    <property type="entry name" value="RNaseA_domain"/>
</dbReference>
<dbReference type="PANTHER" id="PTHR11437">
    <property type="entry name" value="RIBONUCLEASE"/>
    <property type="match status" value="1"/>
</dbReference>
<dbReference type="PANTHER" id="PTHR11437:SF24">
    <property type="entry name" value="RIBONUCLEASE PANCREATIC"/>
    <property type="match status" value="1"/>
</dbReference>
<dbReference type="Pfam" id="PF00074">
    <property type="entry name" value="RnaseA"/>
    <property type="match status" value="1"/>
</dbReference>
<dbReference type="PRINTS" id="PR00794">
    <property type="entry name" value="RIBONUCLEASE"/>
</dbReference>
<dbReference type="SMART" id="SM00092">
    <property type="entry name" value="RNAse_Pc"/>
    <property type="match status" value="1"/>
</dbReference>
<dbReference type="SUPFAM" id="SSF54076">
    <property type="entry name" value="RNase A-like"/>
    <property type="match status" value="1"/>
</dbReference>
<dbReference type="PROSITE" id="PS00127">
    <property type="entry name" value="RNASE_PANCREATIC"/>
    <property type="match status" value="1"/>
</dbReference>
<accession>P00667</accession>
<protein>
    <recommendedName>
        <fullName>Ribonuclease pancreatic</fullName>
        <ecNumber>4.6.1.18</ecNumber>
    </recommendedName>
    <alternativeName>
        <fullName>RNase 1</fullName>
    </alternativeName>
    <alternativeName>
        <fullName>RNase A</fullName>
    </alternativeName>
</protein>
<gene>
    <name type="primary">RNASE1</name>
    <name type="synonym">RNS1</name>
</gene>
<name>RNAS1_ALCAA</name>
<sequence>KESAAAKFERQHMDPSASSISSSNYCNQMMQSRNLTQDRCKPVNTFVHESLADVQAVCFQKNVACKNGQSNCYQSNSAMHITDCRESGNSDYPNCVYKTTQAEKHIIVACEGNPYVPVHFDASV</sequence>
<keyword id="KW-0903">Direct protein sequencing</keyword>
<keyword id="KW-1015">Disulfide bond</keyword>
<keyword id="KW-0255">Endonuclease</keyword>
<keyword id="KW-0325">Glycoprotein</keyword>
<keyword id="KW-0378">Hydrolase</keyword>
<keyword id="KW-0456">Lyase</keyword>
<keyword id="KW-0540">Nuclease</keyword>
<keyword id="KW-0964">Secreted</keyword>